<proteinExistence type="inferred from homology"/>
<keyword id="KW-0032">Aminotransferase</keyword>
<keyword id="KW-0046">Antibiotic resistance</keyword>
<keyword id="KW-0441">Lipid A biosynthesis</keyword>
<keyword id="KW-0444">Lipid biosynthesis</keyword>
<keyword id="KW-0443">Lipid metabolism</keyword>
<keyword id="KW-0448">Lipopolysaccharide biosynthesis</keyword>
<keyword id="KW-0663">Pyridoxal phosphate</keyword>
<keyword id="KW-0808">Transferase</keyword>
<organism>
    <name type="scientific">Yersinia pestis bv. Antiqua (strain Nepal516)</name>
    <dbReference type="NCBI Taxonomy" id="377628"/>
    <lineage>
        <taxon>Bacteria</taxon>
        <taxon>Pseudomonadati</taxon>
        <taxon>Pseudomonadota</taxon>
        <taxon>Gammaproteobacteria</taxon>
        <taxon>Enterobacterales</taxon>
        <taxon>Yersiniaceae</taxon>
        <taxon>Yersinia</taxon>
    </lineage>
</organism>
<sequence length="384" mass="42246">MQSFLPFSRPAIGSEEINAVANVLGSGWITTGPQNHQLETDFCQIFGCKHAIAVCSATAGMHITLLALGIGPGDEVITPSQTWVSTINMIVLLGAEPVMVDVDRDTLMVNAAAIEAAITPNTKAIIPVHYAGAPCDLDALRQISQRHGIPLIEDAAHAVGTRYRDQWIGEQGTAIFSFHAIKNITCAEGGLVATDDDELAARVRRLKFHGLGVDAFDRQIQGRSPQAEVVEPGYKYNLSDIHAAIAVVQLRRLPEINARRQALVASYHKALAHLPLQPLALPHYSHQHAWHLFMVRVDEERCGISRDQLMACLKDMGIGSGLHFRAVHSQKYYRERYPHLCLPNTEWNSARLCTLPLFPDMLDSDIERVANALTTIIGSHRVTK</sequence>
<evidence type="ECO:0000255" key="1">
    <source>
        <dbReference type="HAMAP-Rule" id="MF_01167"/>
    </source>
</evidence>
<name>ARNB_YERPN</name>
<feature type="chain" id="PRO_1000065694" description="UDP-4-amino-4-deoxy-L-arabinose--oxoglutarate aminotransferase">
    <location>
        <begin position="1"/>
        <end position="384"/>
    </location>
</feature>
<feature type="modified residue" description="N6-(pyridoxal phosphate)lysine" evidence="1">
    <location>
        <position position="182"/>
    </location>
</feature>
<reference key="1">
    <citation type="journal article" date="2006" name="J. Bacteriol.">
        <title>Complete genome sequence of Yersinia pestis strains Antiqua and Nepal516: evidence of gene reduction in an emerging pathogen.</title>
        <authorList>
            <person name="Chain P.S.G."/>
            <person name="Hu P."/>
            <person name="Malfatti S.A."/>
            <person name="Radnedge L."/>
            <person name="Larimer F."/>
            <person name="Vergez L.M."/>
            <person name="Worsham P."/>
            <person name="Chu M.C."/>
            <person name="Andersen G.L."/>
        </authorList>
    </citation>
    <scope>NUCLEOTIDE SEQUENCE [LARGE SCALE GENOMIC DNA]</scope>
    <source>
        <strain>Nepal516</strain>
    </source>
</reference>
<reference key="2">
    <citation type="submission" date="2009-04" db="EMBL/GenBank/DDBJ databases">
        <title>Yersinia pestis Nepal516A whole genome shotgun sequencing project.</title>
        <authorList>
            <person name="Plunkett G. III"/>
            <person name="Anderson B.D."/>
            <person name="Baumler D.J."/>
            <person name="Burland V."/>
            <person name="Cabot E.L."/>
            <person name="Glasner J.D."/>
            <person name="Mau B."/>
            <person name="Neeno-Eckwall E."/>
            <person name="Perna N.T."/>
            <person name="Munk A.C."/>
            <person name="Tapia R."/>
            <person name="Green L.D."/>
            <person name="Rogers Y.C."/>
            <person name="Detter J.C."/>
            <person name="Bruce D.C."/>
            <person name="Brettin T.S."/>
        </authorList>
    </citation>
    <scope>NUCLEOTIDE SEQUENCE [LARGE SCALE GENOMIC DNA]</scope>
    <source>
        <strain>Nepal516</strain>
    </source>
</reference>
<comment type="function">
    <text evidence="1">Catalyzes the conversion of UDP-4-keto-arabinose (UDP-Ara4O) to UDP-4-amino-4-deoxy-L-arabinose (UDP-L-Ara4N). The modified arabinose is attached to lipid A and is required for resistance to polymyxin and cationic antimicrobial peptides.</text>
</comment>
<comment type="catalytic activity">
    <reaction evidence="1">
        <text>UDP-4-amino-4-deoxy-beta-L-arabinose + 2-oxoglutarate = UDP-beta-L-threo-pentopyranos-4-ulose + L-glutamate</text>
        <dbReference type="Rhea" id="RHEA:24710"/>
        <dbReference type="ChEBI" id="CHEBI:16810"/>
        <dbReference type="ChEBI" id="CHEBI:29985"/>
        <dbReference type="ChEBI" id="CHEBI:58708"/>
        <dbReference type="ChEBI" id="CHEBI:58710"/>
        <dbReference type="EC" id="2.6.1.87"/>
    </reaction>
</comment>
<comment type="cofactor">
    <cofactor evidence="1">
        <name>pyridoxal 5'-phosphate</name>
        <dbReference type="ChEBI" id="CHEBI:597326"/>
    </cofactor>
</comment>
<comment type="pathway">
    <text evidence="1">Nucleotide-sugar biosynthesis; UDP-4-deoxy-4-formamido-beta-L-arabinose biosynthesis; UDP-4-deoxy-4-formamido-beta-L-arabinose from UDP-alpha-D-glucuronate: step 2/3.</text>
</comment>
<comment type="pathway">
    <text evidence="1">Bacterial outer membrane biogenesis; lipopolysaccharide biosynthesis.</text>
</comment>
<comment type="subunit">
    <text evidence="1">Homodimer.</text>
</comment>
<comment type="similarity">
    <text evidence="1">Belongs to the DegT/DnrJ/EryC1 family. ArnB subfamily.</text>
</comment>
<gene>
    <name evidence="1" type="primary">arnB</name>
    <name type="ordered locus">YPN_1876</name>
    <name type="ORF">YP516_2087</name>
</gene>
<dbReference type="EC" id="2.6.1.87" evidence="1"/>
<dbReference type="EMBL" id="CP000305">
    <property type="protein sequence ID" value="ABG18205.1"/>
    <property type="molecule type" value="Genomic_DNA"/>
</dbReference>
<dbReference type="EMBL" id="ACNQ01000010">
    <property type="protein sequence ID" value="EEO76780.1"/>
    <property type="molecule type" value="Genomic_DNA"/>
</dbReference>
<dbReference type="RefSeq" id="WP_002211825.1">
    <property type="nucleotide sequence ID" value="NZ_ACNQ01000010.1"/>
</dbReference>
<dbReference type="SMR" id="Q1CIH5"/>
<dbReference type="GeneID" id="57976255"/>
<dbReference type="KEGG" id="ypn:YPN_1876"/>
<dbReference type="HOGENOM" id="CLU_033332_0_3_6"/>
<dbReference type="UniPathway" id="UPA00030"/>
<dbReference type="UniPathway" id="UPA00032">
    <property type="reaction ID" value="UER00493"/>
</dbReference>
<dbReference type="Proteomes" id="UP000008936">
    <property type="component" value="Chromosome"/>
</dbReference>
<dbReference type="GO" id="GO:0016020">
    <property type="term" value="C:membrane"/>
    <property type="evidence" value="ECO:0007669"/>
    <property type="project" value="GOC"/>
</dbReference>
<dbReference type="GO" id="GO:0030170">
    <property type="term" value="F:pyridoxal phosphate binding"/>
    <property type="evidence" value="ECO:0007669"/>
    <property type="project" value="TreeGrafter"/>
</dbReference>
<dbReference type="GO" id="GO:0099620">
    <property type="term" value="F:UDP-4-amino-4-deoxy-L-arabinose aminotransferase"/>
    <property type="evidence" value="ECO:0007669"/>
    <property type="project" value="UniProtKB-EC"/>
</dbReference>
<dbReference type="GO" id="GO:0009245">
    <property type="term" value="P:lipid A biosynthetic process"/>
    <property type="evidence" value="ECO:0007669"/>
    <property type="project" value="UniProtKB-KW"/>
</dbReference>
<dbReference type="GO" id="GO:0009103">
    <property type="term" value="P:lipopolysaccharide biosynthetic process"/>
    <property type="evidence" value="ECO:0007669"/>
    <property type="project" value="UniProtKB-UniRule"/>
</dbReference>
<dbReference type="GO" id="GO:0046677">
    <property type="term" value="P:response to antibiotic"/>
    <property type="evidence" value="ECO:0007669"/>
    <property type="project" value="UniProtKB-KW"/>
</dbReference>
<dbReference type="CDD" id="cd00616">
    <property type="entry name" value="AHBA_syn"/>
    <property type="match status" value="1"/>
</dbReference>
<dbReference type="FunFam" id="3.40.640.10:FF:000040">
    <property type="entry name" value="UDP-4-amino-4-deoxy-L-arabinose--oxoglutarate aminotransferase"/>
    <property type="match status" value="1"/>
</dbReference>
<dbReference type="FunFam" id="3.90.1150.10:FF:000030">
    <property type="entry name" value="UDP-4-amino-4-deoxy-L-arabinose--oxoglutarate aminotransferase"/>
    <property type="match status" value="1"/>
</dbReference>
<dbReference type="Gene3D" id="3.90.1150.10">
    <property type="entry name" value="Aspartate Aminotransferase, domain 1"/>
    <property type="match status" value="1"/>
</dbReference>
<dbReference type="Gene3D" id="3.40.640.10">
    <property type="entry name" value="Type I PLP-dependent aspartate aminotransferase-like (Major domain)"/>
    <property type="match status" value="1"/>
</dbReference>
<dbReference type="HAMAP" id="MF_01167">
    <property type="entry name" value="ArnB_transfer"/>
    <property type="match status" value="1"/>
</dbReference>
<dbReference type="InterPro" id="IPR022850">
    <property type="entry name" value="ArnB_NH2Trfase"/>
</dbReference>
<dbReference type="InterPro" id="IPR000653">
    <property type="entry name" value="DegT/StrS_aminotransferase"/>
</dbReference>
<dbReference type="InterPro" id="IPR015424">
    <property type="entry name" value="PyrdxlP-dep_Trfase"/>
</dbReference>
<dbReference type="InterPro" id="IPR015421">
    <property type="entry name" value="PyrdxlP-dep_Trfase_major"/>
</dbReference>
<dbReference type="InterPro" id="IPR015422">
    <property type="entry name" value="PyrdxlP-dep_Trfase_small"/>
</dbReference>
<dbReference type="NCBIfam" id="NF008658">
    <property type="entry name" value="PRK11658.1"/>
    <property type="match status" value="1"/>
</dbReference>
<dbReference type="PANTHER" id="PTHR30244">
    <property type="entry name" value="TRANSAMINASE"/>
    <property type="match status" value="1"/>
</dbReference>
<dbReference type="PANTHER" id="PTHR30244:SF41">
    <property type="entry name" value="UDP-4-AMINO-4-DEOXY-L-ARABINOSE--OXOGLUTARATE AMINOTRANSFERASE"/>
    <property type="match status" value="1"/>
</dbReference>
<dbReference type="Pfam" id="PF01041">
    <property type="entry name" value="DegT_DnrJ_EryC1"/>
    <property type="match status" value="1"/>
</dbReference>
<dbReference type="PIRSF" id="PIRSF000390">
    <property type="entry name" value="PLP_StrS"/>
    <property type="match status" value="1"/>
</dbReference>
<dbReference type="SUPFAM" id="SSF53383">
    <property type="entry name" value="PLP-dependent transferases"/>
    <property type="match status" value="1"/>
</dbReference>
<protein>
    <recommendedName>
        <fullName evidence="1">UDP-4-amino-4-deoxy-L-arabinose--oxoglutarate aminotransferase</fullName>
        <ecNumber evidence="1">2.6.1.87</ecNumber>
    </recommendedName>
    <alternativeName>
        <fullName evidence="1">UDP-(beta-L-threo-pentapyranosyl-4''-ulose diphosphate) aminotransferase</fullName>
        <shortName evidence="1">UDP-Ara4O aminotransferase</shortName>
    </alternativeName>
    <alternativeName>
        <fullName evidence="1">UDP-4-amino-4-deoxy-L-arabinose aminotransferase</fullName>
    </alternativeName>
</protein>
<accession>Q1CIH5</accession>
<accession>C4GTH9</accession>